<comment type="function">
    <text evidence="3 6">Endonuclease involved in intron homing (Probable). Recognizes DNA in the 23S rRNA gene intron (minimally 5'-CCGGGTAAGTTCCGG-3'), cutting after A-8 on the top and C-11 on the bottom strand. Has a slow turnover rate, cuts the coding strand with a slight preference over the non-coding strand (PubMed:9092657).</text>
</comment>
<comment type="cofactor">
    <cofactor evidence="3">
        <name>a divalent metal cation</name>
        <dbReference type="ChEBI" id="CHEBI:60240"/>
    </cofactor>
    <text evidence="3">Mn(2+), Co(2+) and Mg(2+) enable equal cleavage, Zn(2+) is less active and Ni(2+) is essentially inactive.</text>
</comment>
<comment type="biophysicochemical properties">
    <kinetics>
        <KM evidence="3">4 nM for a 25-bp DNA substrate</KM>
    </kinetics>
    <temperatureDependence>
        <text evidence="3">Not extremely thermostable, has lost significant activity after 90 minues at 65 degreees Celsius, has no activity after 4 hours.</text>
    </temperatureDependence>
</comment>
<comment type="miscellaneous">
    <text evidence="2">Translated from a circularized intron.</text>
</comment>
<proteinExistence type="evidence at protein level"/>
<evidence type="ECO:0000255" key="1">
    <source>
        <dbReference type="PROSITE-ProRule" id="PRU00273"/>
    </source>
</evidence>
<evidence type="ECO:0000269" key="2">
    <source>
    </source>
</evidence>
<evidence type="ECO:0000269" key="3">
    <source>
    </source>
</evidence>
<evidence type="ECO:0000303" key="4">
    <source>
    </source>
</evidence>
<evidence type="ECO:0000303" key="5">
    <source>
    </source>
</evidence>
<evidence type="ECO:0000305" key="6"/>
<evidence type="ECO:0007829" key="7">
    <source>
        <dbReference type="PDB" id="2VS7"/>
    </source>
</evidence>
<evidence type="ECO:0007829" key="8">
    <source>
        <dbReference type="PDB" id="4UN8"/>
    </source>
</evidence>
<accession>P21505</accession>
<keyword id="KW-0002">3D-structure</keyword>
<keyword id="KW-0255">Endonuclease</keyword>
<keyword id="KW-0378">Hydrolase</keyword>
<keyword id="KW-0404">Intron homing</keyword>
<keyword id="KW-0460">Magnesium</keyword>
<keyword id="KW-0540">Nuclease</keyword>
<name>DMO1_DESMO</name>
<organism>
    <name type="scientific">Desulfurococcus mucosus</name>
    <name type="common">Desulfurococcus mobilis</name>
    <dbReference type="NCBI Taxonomy" id="2275"/>
    <lineage>
        <taxon>Archaea</taxon>
        <taxon>Thermoproteota</taxon>
        <taxon>Thermoprotei</taxon>
        <taxon>Desulfurococcales</taxon>
        <taxon>Desulfurococcaceae</taxon>
        <taxon>Desulfurococcus</taxon>
    </lineage>
</organism>
<dbReference type="EC" id="3.1.-.-" evidence="3"/>
<dbReference type="EMBL" id="X03263">
    <property type="protein sequence ID" value="CAA27018.1"/>
    <property type="molecule type" value="Genomic_DNA"/>
</dbReference>
<dbReference type="PIR" id="A31224">
    <property type="entry name" value="A31224"/>
</dbReference>
<dbReference type="PDB" id="1B24">
    <property type="method" value="X-ray"/>
    <property type="resolution" value="2.20 A"/>
    <property type="chains" value="A=1-188"/>
</dbReference>
<dbReference type="PDB" id="1MOW">
    <property type="method" value="X-ray"/>
    <property type="resolution" value="2.40 A"/>
    <property type="chains" value="A/D/G/J=-"/>
</dbReference>
<dbReference type="PDB" id="2VS7">
    <property type="method" value="X-ray"/>
    <property type="resolution" value="2.05 A"/>
    <property type="chains" value="A/D/G=2-188"/>
</dbReference>
<dbReference type="PDB" id="2VS8">
    <property type="method" value="X-ray"/>
    <property type="resolution" value="2.10 A"/>
    <property type="chains" value="A/F/K=2-188"/>
</dbReference>
<dbReference type="PDB" id="4D6N">
    <property type="method" value="X-ray"/>
    <property type="resolution" value="2.35 A"/>
    <property type="chains" value="A/F/K=2-188"/>
</dbReference>
<dbReference type="PDB" id="4D6O">
    <property type="method" value="X-ray"/>
    <property type="resolution" value="2.20 A"/>
    <property type="chains" value="A/D/G=2-188"/>
</dbReference>
<dbReference type="PDB" id="4UN7">
    <property type="method" value="X-ray"/>
    <property type="resolution" value="2.70 A"/>
    <property type="chains" value="A/D/G=2-188"/>
</dbReference>
<dbReference type="PDB" id="4UN8">
    <property type="method" value="X-ray"/>
    <property type="resolution" value="2.60 A"/>
    <property type="chains" value="A/D/G=2-188"/>
</dbReference>
<dbReference type="PDB" id="4UN9">
    <property type="method" value="X-ray"/>
    <property type="resolution" value="2.73 A"/>
    <property type="chains" value="A/D/G=2-188"/>
</dbReference>
<dbReference type="PDB" id="4UNA">
    <property type="method" value="X-ray"/>
    <property type="resolution" value="2.30 A"/>
    <property type="chains" value="A/D/G=2-188"/>
</dbReference>
<dbReference type="PDB" id="4UNB">
    <property type="method" value="X-ray"/>
    <property type="resolution" value="2.55 A"/>
    <property type="chains" value="A/D/G=2-188"/>
</dbReference>
<dbReference type="PDB" id="4UNC">
    <property type="method" value="X-ray"/>
    <property type="resolution" value="2.30 A"/>
    <property type="chains" value="A/D/G=2-188"/>
</dbReference>
<dbReference type="PDB" id="4UT0">
    <property type="method" value="X-ray"/>
    <property type="resolution" value="2.40 A"/>
    <property type="chains" value="A/F/K=2-188"/>
</dbReference>
<dbReference type="PDB" id="5A0W">
    <property type="method" value="X-ray"/>
    <property type="resolution" value="2.20 A"/>
    <property type="chains" value="A/D/G=2-188"/>
</dbReference>
<dbReference type="PDB" id="5AK9">
    <property type="method" value="X-ray"/>
    <property type="resolution" value="2.60 A"/>
    <property type="chains" value="A/E/J=2-188"/>
</dbReference>
<dbReference type="PDB" id="5AKF">
    <property type="method" value="X-ray"/>
    <property type="resolution" value="2.45 A"/>
    <property type="chains" value="A/E/I=2-188"/>
</dbReference>
<dbReference type="PDB" id="5AKM">
    <property type="method" value="X-ray"/>
    <property type="resolution" value="2.40 A"/>
    <property type="chains" value="A/F/K=2-188"/>
</dbReference>
<dbReference type="PDB" id="5AKN">
    <property type="method" value="X-ray"/>
    <property type="resolution" value="2.75 A"/>
    <property type="chains" value="A/F/K=2-188"/>
</dbReference>
<dbReference type="PDB" id="5O6G">
    <property type="method" value="X-ray"/>
    <property type="resolution" value="2.75 A"/>
    <property type="chains" value="A/D/G=2-188"/>
</dbReference>
<dbReference type="PDB" id="5O6I">
    <property type="method" value="X-ray"/>
    <property type="resolution" value="2.25 A"/>
    <property type="chains" value="A/F/K=2-188"/>
</dbReference>
<dbReference type="PDBsum" id="1B24"/>
<dbReference type="PDBsum" id="1MOW"/>
<dbReference type="PDBsum" id="2VS7"/>
<dbReference type="PDBsum" id="2VS8"/>
<dbReference type="PDBsum" id="4D6N"/>
<dbReference type="PDBsum" id="4D6O"/>
<dbReference type="PDBsum" id="4UN7"/>
<dbReference type="PDBsum" id="4UN8"/>
<dbReference type="PDBsum" id="4UN9"/>
<dbReference type="PDBsum" id="4UNA"/>
<dbReference type="PDBsum" id="4UNB"/>
<dbReference type="PDBsum" id="4UNC"/>
<dbReference type="PDBsum" id="4UT0"/>
<dbReference type="PDBsum" id="5A0W"/>
<dbReference type="PDBsum" id="5AK9"/>
<dbReference type="PDBsum" id="5AKF"/>
<dbReference type="PDBsum" id="5AKM"/>
<dbReference type="PDBsum" id="5AKN"/>
<dbReference type="PDBsum" id="5O6G"/>
<dbReference type="PDBsum" id="5O6I"/>
<dbReference type="SMR" id="P21505"/>
<dbReference type="REBASE" id="2542">
    <property type="entry name" value="I-DmoI"/>
</dbReference>
<dbReference type="EvolutionaryTrace" id="P21505"/>
<dbReference type="GO" id="GO:0004519">
    <property type="term" value="F:endonuclease activity"/>
    <property type="evidence" value="ECO:0007669"/>
    <property type="project" value="UniProtKB-KW"/>
</dbReference>
<dbReference type="GO" id="GO:0016539">
    <property type="term" value="P:intein-mediated protein splicing"/>
    <property type="evidence" value="ECO:0007669"/>
    <property type="project" value="InterPro"/>
</dbReference>
<dbReference type="GO" id="GO:0006314">
    <property type="term" value="P:intron homing"/>
    <property type="evidence" value="ECO:0007669"/>
    <property type="project" value="UniProtKB-KW"/>
</dbReference>
<dbReference type="Gene3D" id="3.10.28.10">
    <property type="entry name" value="Homing endonucleases"/>
    <property type="match status" value="2"/>
</dbReference>
<dbReference type="InterPro" id="IPR027434">
    <property type="entry name" value="Homing_endonucl"/>
</dbReference>
<dbReference type="InterPro" id="IPR006142">
    <property type="entry name" value="INTEIN"/>
</dbReference>
<dbReference type="InterPro" id="IPR004042">
    <property type="entry name" value="Intein_endonuc_central"/>
</dbReference>
<dbReference type="InterPro" id="IPR004860">
    <property type="entry name" value="LAGLIDADG_dom"/>
</dbReference>
<dbReference type="Pfam" id="PF14528">
    <property type="entry name" value="LAGLIDADG_3"/>
    <property type="match status" value="2"/>
</dbReference>
<dbReference type="PRINTS" id="PR00379">
    <property type="entry name" value="INTEIN"/>
</dbReference>
<dbReference type="SUPFAM" id="SSF55608">
    <property type="entry name" value="Homing endonucleases"/>
    <property type="match status" value="2"/>
</dbReference>
<dbReference type="PROSITE" id="PS50819">
    <property type="entry name" value="INTEIN_ENDONUCLEASE"/>
    <property type="match status" value="1"/>
</dbReference>
<reference key="1">
    <citation type="journal article" date="1988" name="Cell">
        <title>Novel splicing mechanism for the ribosomal RNA intron in the archaebacterium Desulfurococcus mobilis.</title>
        <authorList>
            <person name="Kjems J."/>
            <person name="Garrett R.A."/>
        </authorList>
    </citation>
    <scope>NUCLEOTIDE SEQUENCE [GENOMIC DNA]</scope>
</reference>
<reference key="2">
    <citation type="journal article" date="1985" name="Nature">
        <title>An intron in the 23S ribosomal RNA gene of the archaebacterium Desulfurococcus mobilis.</title>
        <authorList>
            <person name="Kjems J."/>
            <person name="Garrett R.A."/>
        </authorList>
    </citation>
    <scope>NUCLEOTIDE SEQUENCE [GENOMIC DNA] OF 1-188</scope>
</reference>
<reference key="3">
    <citation type="journal article" date="1997" name="Nucleic Acids Res.">
        <title>Profile of the DNA recognition site of the archaeal homing endonuclease I-DmoI.</title>
        <authorList>
            <person name="Aagaard C."/>
            <person name="Awayez M.J."/>
            <person name="Garrett R.A."/>
        </authorList>
    </citation>
    <scope>FUNCTION</scope>
    <scope>CATALYTIC ACTIVITY</scope>
    <scope>BIOPHYSICOCHEMICAL PROPERTIES</scope>
    <scope>COFACTOR</scope>
    <scope>DNA-BINDING</scope>
</reference>
<reference key="4">
    <citation type="journal article" date="2003" name="Nucleic Acids Res.">
        <title>A nomenclature for restriction enzymes, DNA methyltransferases, homing endonucleases and their genes.</title>
        <authorList>
            <person name="Roberts R.J."/>
            <person name="Belfort M."/>
            <person name="Bestor T."/>
            <person name="Bhagwat A.S."/>
            <person name="Bickle T.A."/>
            <person name="Bitinaite J."/>
            <person name="Blumenthal R.M."/>
            <person name="Degtyarev S.K."/>
            <person name="Dryden D.T."/>
            <person name="Dybvig K."/>
            <person name="Firman K."/>
            <person name="Gromova E.S."/>
            <person name="Gumport R.I."/>
            <person name="Halford S.E."/>
            <person name="Hattman S."/>
            <person name="Heitman J."/>
            <person name="Hornby D.P."/>
            <person name="Janulaitis A."/>
            <person name="Jeltsch A."/>
            <person name="Josephsen J."/>
            <person name="Kiss A."/>
            <person name="Klaenhammer T.R."/>
            <person name="Kobayashi I."/>
            <person name="Kong H."/>
            <person name="Krueger D.H."/>
            <person name="Lacks S."/>
            <person name="Marinus M.G."/>
            <person name="Miyahara M."/>
            <person name="Morgan R.D."/>
            <person name="Murray N.E."/>
            <person name="Nagaraja V."/>
            <person name="Piekarowicz A."/>
            <person name="Pingoud A."/>
            <person name="Raleigh E."/>
            <person name="Rao D.N."/>
            <person name="Reich N."/>
            <person name="Repin V.E."/>
            <person name="Selker E.U."/>
            <person name="Shaw P.C."/>
            <person name="Stein D.C."/>
            <person name="Stoddard B.L."/>
            <person name="Szybalski W."/>
            <person name="Trautner T.A."/>
            <person name="Van Etten J.L."/>
            <person name="Vitor J.M."/>
            <person name="Wilson G.G."/>
            <person name="Xu S.Y."/>
        </authorList>
    </citation>
    <scope>NOMENCLATURE</scope>
</reference>
<reference key="5">
    <citation type="journal article" date="1999" name="J. Mol. Biol.">
        <title>Crystal structure of the thermostable archaeal intron-encoded endonuclease I-DmoI.</title>
        <authorList>
            <person name="Silva G.H."/>
            <person name="Dalgaard J.Z."/>
            <person name="Belfort M."/>
            <person name="Van Roey P."/>
        </authorList>
    </citation>
    <scope>X-RAY CRYSTALLOGRAPHY (2.2 ANGSTROMS)</scope>
</reference>
<sequence>MHNNENVSGISAYLLGLIIGDGGLYKLKYKGNRSEYRVVITQKSENLIKQHIAPLMQFLIDELNVKSKIQIVKGDTRYELRVSSKKLYYYFANMLERIRLFNMREQIAFIKGLYVAEGDKTLKRLRIWNKNKALLEIVSRWLNNLGVRNTIHLDDHRHGVYVLNISLRDRIKFVHTILSSHLNPLPPERAGGYT</sequence>
<protein>
    <recommendedName>
        <fullName evidence="4 5">Homing endonuclease I-DmoI</fullName>
        <ecNumber evidence="3">3.1.-.-</ecNumber>
    </recommendedName>
</protein>
<feature type="chain" id="PRO_0000192791" description="Homing endonuclease I-DmoI">
    <location>
        <begin position="1"/>
        <end position="194"/>
    </location>
</feature>
<feature type="domain" description="DOD-type homing endonuclease" evidence="1">
    <location>
        <begin position="14"/>
        <end position="147"/>
    </location>
</feature>
<feature type="active site">
    <location>
        <position position="21"/>
    </location>
</feature>
<feature type="active site">
    <location>
        <position position="117"/>
    </location>
</feature>
<feature type="helix" evidence="7">
    <location>
        <begin position="6"/>
        <end position="21"/>
    </location>
</feature>
<feature type="strand" evidence="7">
    <location>
        <begin position="22"/>
        <end position="28"/>
    </location>
</feature>
<feature type="strand" evidence="7">
    <location>
        <begin position="30"/>
        <end position="32"/>
    </location>
</feature>
<feature type="strand" evidence="7">
    <location>
        <begin position="34"/>
        <end position="43"/>
    </location>
</feature>
<feature type="helix" evidence="7">
    <location>
        <begin position="45"/>
        <end position="50"/>
    </location>
</feature>
<feature type="helix" evidence="7">
    <location>
        <begin position="52"/>
        <end position="62"/>
    </location>
</feature>
<feature type="strand" evidence="7">
    <location>
        <begin position="69"/>
        <end position="73"/>
    </location>
</feature>
<feature type="strand" evidence="7">
    <location>
        <begin position="78"/>
        <end position="83"/>
    </location>
</feature>
<feature type="helix" evidence="7">
    <location>
        <begin position="85"/>
        <end position="96"/>
    </location>
</feature>
<feature type="helix" evidence="7">
    <location>
        <begin position="98"/>
        <end position="100"/>
    </location>
</feature>
<feature type="helix" evidence="7">
    <location>
        <begin position="103"/>
        <end position="117"/>
    </location>
</feature>
<feature type="strand" evidence="7">
    <location>
        <begin position="123"/>
        <end position="130"/>
    </location>
</feature>
<feature type="helix" evidence="7">
    <location>
        <begin position="132"/>
        <end position="144"/>
    </location>
</feature>
<feature type="strand" evidence="7">
    <location>
        <begin position="149"/>
        <end position="155"/>
    </location>
</feature>
<feature type="turn" evidence="7">
    <location>
        <begin position="156"/>
        <end position="159"/>
    </location>
</feature>
<feature type="strand" evidence="7">
    <location>
        <begin position="160"/>
        <end position="165"/>
    </location>
</feature>
<feature type="helix" evidence="7">
    <location>
        <begin position="167"/>
        <end position="169"/>
    </location>
</feature>
<feature type="helix" evidence="7">
    <location>
        <begin position="170"/>
        <end position="176"/>
    </location>
</feature>
<feature type="turn" evidence="7">
    <location>
        <begin position="177"/>
        <end position="179"/>
    </location>
</feature>
<feature type="strand" evidence="8">
    <location>
        <begin position="180"/>
        <end position="182"/>
    </location>
</feature>
<feature type="helix" evidence="7">
    <location>
        <begin position="187"/>
        <end position="190"/>
    </location>
</feature>